<name>DAPF_PHEZH</name>
<reference key="1">
    <citation type="journal article" date="2008" name="BMC Genomics">
        <title>Complete genome of Phenylobacterium zucineum - a novel facultative intracellular bacterium isolated from human erythroleukemia cell line K562.</title>
        <authorList>
            <person name="Luo Y."/>
            <person name="Xu X."/>
            <person name="Ding Z."/>
            <person name="Liu Z."/>
            <person name="Zhang B."/>
            <person name="Yan Z."/>
            <person name="Sun J."/>
            <person name="Hu S."/>
            <person name="Hu X."/>
        </authorList>
    </citation>
    <scope>NUCLEOTIDE SEQUENCE [LARGE SCALE GENOMIC DNA]</scope>
    <source>
        <strain>HLK1</strain>
    </source>
</reference>
<keyword id="KW-0028">Amino-acid biosynthesis</keyword>
<keyword id="KW-0963">Cytoplasm</keyword>
<keyword id="KW-0413">Isomerase</keyword>
<keyword id="KW-0457">Lysine biosynthesis</keyword>
<keyword id="KW-1185">Reference proteome</keyword>
<sequence>MSAAMGRPFLKMNGLGNDFVVVETRSAPFEPTAAQVRAIADRATGIGCDQLIAVDPAEGADAHVRFWNADGEEVGACGNGTRCVGWLLMQSSGKDEAVIETRAGRLVATRAGERLVSVDMGPPRLEWNEIPLAEPHDTRALDVVLYHHADLMAPPGCVSMGNPHVVFFVPDAEQAPAAEAGPAIEGHPLFPEHVNVGFAQVKAPDRIRLRVWERGAGLTKACGTGACAAMVAASRRGLIGRHATMELDGGELFVEWRADGHVIMTGPAAVDFQGELP</sequence>
<gene>
    <name evidence="1" type="primary">dapF</name>
    <name type="ordered locus">PHZ_c0127</name>
</gene>
<accession>B4RCE2</accession>
<proteinExistence type="inferred from homology"/>
<dbReference type="EC" id="5.1.1.7" evidence="1"/>
<dbReference type="EMBL" id="CP000747">
    <property type="protein sequence ID" value="ACG76541.1"/>
    <property type="molecule type" value="Genomic_DNA"/>
</dbReference>
<dbReference type="SMR" id="B4RCE2"/>
<dbReference type="STRING" id="450851.PHZ_c0127"/>
<dbReference type="KEGG" id="pzu:PHZ_c0127"/>
<dbReference type="eggNOG" id="COG0253">
    <property type="taxonomic scope" value="Bacteria"/>
</dbReference>
<dbReference type="HOGENOM" id="CLU_053306_1_0_5"/>
<dbReference type="OrthoDB" id="9805408at2"/>
<dbReference type="UniPathway" id="UPA00034">
    <property type="reaction ID" value="UER00025"/>
</dbReference>
<dbReference type="Proteomes" id="UP000001868">
    <property type="component" value="Chromosome"/>
</dbReference>
<dbReference type="GO" id="GO:0005829">
    <property type="term" value="C:cytosol"/>
    <property type="evidence" value="ECO:0007669"/>
    <property type="project" value="TreeGrafter"/>
</dbReference>
<dbReference type="GO" id="GO:0008837">
    <property type="term" value="F:diaminopimelate epimerase activity"/>
    <property type="evidence" value="ECO:0007669"/>
    <property type="project" value="UniProtKB-UniRule"/>
</dbReference>
<dbReference type="GO" id="GO:0009089">
    <property type="term" value="P:lysine biosynthetic process via diaminopimelate"/>
    <property type="evidence" value="ECO:0007669"/>
    <property type="project" value="UniProtKB-UniRule"/>
</dbReference>
<dbReference type="Gene3D" id="3.10.310.10">
    <property type="entry name" value="Diaminopimelate Epimerase, Chain A, domain 1"/>
    <property type="match status" value="2"/>
</dbReference>
<dbReference type="HAMAP" id="MF_00197">
    <property type="entry name" value="DAP_epimerase"/>
    <property type="match status" value="1"/>
</dbReference>
<dbReference type="InterPro" id="IPR018510">
    <property type="entry name" value="DAP_epimerase_AS"/>
</dbReference>
<dbReference type="InterPro" id="IPR001653">
    <property type="entry name" value="DAP_epimerase_DapF"/>
</dbReference>
<dbReference type="NCBIfam" id="TIGR00652">
    <property type="entry name" value="DapF"/>
    <property type="match status" value="1"/>
</dbReference>
<dbReference type="PANTHER" id="PTHR31689:SF0">
    <property type="entry name" value="DIAMINOPIMELATE EPIMERASE"/>
    <property type="match status" value="1"/>
</dbReference>
<dbReference type="PANTHER" id="PTHR31689">
    <property type="entry name" value="DIAMINOPIMELATE EPIMERASE, CHLOROPLASTIC"/>
    <property type="match status" value="1"/>
</dbReference>
<dbReference type="Pfam" id="PF01678">
    <property type="entry name" value="DAP_epimerase"/>
    <property type="match status" value="2"/>
</dbReference>
<dbReference type="SUPFAM" id="SSF54506">
    <property type="entry name" value="Diaminopimelate epimerase-like"/>
    <property type="match status" value="2"/>
</dbReference>
<dbReference type="PROSITE" id="PS01326">
    <property type="entry name" value="DAP_EPIMERASE"/>
    <property type="match status" value="1"/>
</dbReference>
<protein>
    <recommendedName>
        <fullName evidence="1">Diaminopimelate epimerase</fullName>
        <shortName evidence="1">DAP epimerase</shortName>
        <ecNumber evidence="1">5.1.1.7</ecNumber>
    </recommendedName>
    <alternativeName>
        <fullName evidence="1">PLP-independent amino acid racemase</fullName>
    </alternativeName>
</protein>
<organism>
    <name type="scientific">Phenylobacterium zucineum (strain HLK1)</name>
    <dbReference type="NCBI Taxonomy" id="450851"/>
    <lineage>
        <taxon>Bacteria</taxon>
        <taxon>Pseudomonadati</taxon>
        <taxon>Pseudomonadota</taxon>
        <taxon>Alphaproteobacteria</taxon>
        <taxon>Caulobacterales</taxon>
        <taxon>Caulobacteraceae</taxon>
        <taxon>Phenylobacterium</taxon>
    </lineage>
</organism>
<evidence type="ECO:0000255" key="1">
    <source>
        <dbReference type="HAMAP-Rule" id="MF_00197"/>
    </source>
</evidence>
<comment type="function">
    <text evidence="1">Catalyzes the stereoinversion of LL-2,6-diaminopimelate (L,L-DAP) to meso-diaminopimelate (meso-DAP), a precursor of L-lysine and an essential component of the bacterial peptidoglycan.</text>
</comment>
<comment type="catalytic activity">
    <reaction evidence="1">
        <text>(2S,6S)-2,6-diaminopimelate = meso-2,6-diaminopimelate</text>
        <dbReference type="Rhea" id="RHEA:15393"/>
        <dbReference type="ChEBI" id="CHEBI:57609"/>
        <dbReference type="ChEBI" id="CHEBI:57791"/>
        <dbReference type="EC" id="5.1.1.7"/>
    </reaction>
</comment>
<comment type="pathway">
    <text evidence="1">Amino-acid biosynthesis; L-lysine biosynthesis via DAP pathway; DL-2,6-diaminopimelate from LL-2,6-diaminopimelate: step 1/1.</text>
</comment>
<comment type="subunit">
    <text evidence="1">Homodimer.</text>
</comment>
<comment type="subcellular location">
    <subcellularLocation>
        <location evidence="1">Cytoplasm</location>
    </subcellularLocation>
</comment>
<comment type="similarity">
    <text evidence="1">Belongs to the diaminopimelate epimerase family.</text>
</comment>
<feature type="chain" id="PRO_1000099255" description="Diaminopimelate epimerase">
    <location>
        <begin position="1"/>
        <end position="277"/>
    </location>
</feature>
<feature type="active site" description="Proton donor" evidence="1">
    <location>
        <position position="77"/>
    </location>
</feature>
<feature type="active site" description="Proton acceptor" evidence="1">
    <location>
        <position position="222"/>
    </location>
</feature>
<feature type="binding site" evidence="1">
    <location>
        <position position="17"/>
    </location>
    <ligand>
        <name>substrate</name>
    </ligand>
</feature>
<feature type="binding site" evidence="1">
    <location>
        <position position="50"/>
    </location>
    <ligand>
        <name>substrate</name>
    </ligand>
</feature>
<feature type="binding site" evidence="1">
    <location>
        <position position="68"/>
    </location>
    <ligand>
        <name>substrate</name>
    </ligand>
</feature>
<feature type="binding site" evidence="1">
    <location>
        <begin position="78"/>
        <end position="79"/>
    </location>
    <ligand>
        <name>substrate</name>
    </ligand>
</feature>
<feature type="binding site" evidence="1">
    <location>
        <position position="162"/>
    </location>
    <ligand>
        <name>substrate</name>
    </ligand>
</feature>
<feature type="binding site" evidence="1">
    <location>
        <position position="195"/>
    </location>
    <ligand>
        <name>substrate</name>
    </ligand>
</feature>
<feature type="binding site" evidence="1">
    <location>
        <begin position="213"/>
        <end position="214"/>
    </location>
    <ligand>
        <name>substrate</name>
    </ligand>
</feature>
<feature type="binding site" evidence="1">
    <location>
        <begin position="223"/>
        <end position="224"/>
    </location>
    <ligand>
        <name>substrate</name>
    </ligand>
</feature>
<feature type="site" description="Could be important to modulate the pK values of the two catalytic cysteine residues" evidence="1">
    <location>
        <position position="164"/>
    </location>
</feature>
<feature type="site" description="Could be important to modulate the pK values of the two catalytic cysteine residues" evidence="1">
    <location>
        <position position="213"/>
    </location>
</feature>